<dbReference type="EC" id="5.4.99.12" evidence="1"/>
<dbReference type="EMBL" id="CP001150">
    <property type="protein sequence ID" value="ACM01771.1"/>
    <property type="molecule type" value="Genomic_DNA"/>
</dbReference>
<dbReference type="RefSeq" id="WP_015921060.1">
    <property type="nucleotide sequence ID" value="NC_011963.1"/>
</dbReference>
<dbReference type="SMR" id="B9KKX4"/>
<dbReference type="GeneID" id="67447306"/>
<dbReference type="KEGG" id="rsk:RSKD131_1911"/>
<dbReference type="HOGENOM" id="CLU_014673_0_2_5"/>
<dbReference type="GO" id="GO:0003723">
    <property type="term" value="F:RNA binding"/>
    <property type="evidence" value="ECO:0007669"/>
    <property type="project" value="InterPro"/>
</dbReference>
<dbReference type="GO" id="GO:0160147">
    <property type="term" value="F:tRNA pseudouridine(38-40) synthase activity"/>
    <property type="evidence" value="ECO:0007669"/>
    <property type="project" value="UniProtKB-EC"/>
</dbReference>
<dbReference type="GO" id="GO:0031119">
    <property type="term" value="P:tRNA pseudouridine synthesis"/>
    <property type="evidence" value="ECO:0007669"/>
    <property type="project" value="UniProtKB-UniRule"/>
</dbReference>
<dbReference type="CDD" id="cd02570">
    <property type="entry name" value="PseudoU_synth_EcTruA"/>
    <property type="match status" value="1"/>
</dbReference>
<dbReference type="FunFam" id="3.30.70.580:FF:000001">
    <property type="entry name" value="tRNA pseudouridine synthase A"/>
    <property type="match status" value="1"/>
</dbReference>
<dbReference type="Gene3D" id="3.30.70.660">
    <property type="entry name" value="Pseudouridine synthase I, catalytic domain, C-terminal subdomain"/>
    <property type="match status" value="1"/>
</dbReference>
<dbReference type="Gene3D" id="3.30.70.580">
    <property type="entry name" value="Pseudouridine synthase I, catalytic domain, N-terminal subdomain"/>
    <property type="match status" value="1"/>
</dbReference>
<dbReference type="HAMAP" id="MF_00171">
    <property type="entry name" value="TruA"/>
    <property type="match status" value="1"/>
</dbReference>
<dbReference type="InterPro" id="IPR020103">
    <property type="entry name" value="PsdUridine_synth_cat_dom_sf"/>
</dbReference>
<dbReference type="InterPro" id="IPR001406">
    <property type="entry name" value="PsdUridine_synth_TruA"/>
</dbReference>
<dbReference type="InterPro" id="IPR020097">
    <property type="entry name" value="PsdUridine_synth_TruA_a/b_dom"/>
</dbReference>
<dbReference type="InterPro" id="IPR020095">
    <property type="entry name" value="PsdUridine_synth_TruA_C"/>
</dbReference>
<dbReference type="InterPro" id="IPR020094">
    <property type="entry name" value="TruA/RsuA/RluB/E/F_N"/>
</dbReference>
<dbReference type="NCBIfam" id="TIGR00071">
    <property type="entry name" value="hisT_truA"/>
    <property type="match status" value="1"/>
</dbReference>
<dbReference type="PANTHER" id="PTHR11142">
    <property type="entry name" value="PSEUDOURIDYLATE SYNTHASE"/>
    <property type="match status" value="1"/>
</dbReference>
<dbReference type="PANTHER" id="PTHR11142:SF0">
    <property type="entry name" value="TRNA PSEUDOURIDINE SYNTHASE-LIKE 1"/>
    <property type="match status" value="1"/>
</dbReference>
<dbReference type="Pfam" id="PF01416">
    <property type="entry name" value="PseudoU_synth_1"/>
    <property type="match status" value="2"/>
</dbReference>
<dbReference type="PIRSF" id="PIRSF001430">
    <property type="entry name" value="tRNA_psdUrid_synth"/>
    <property type="match status" value="1"/>
</dbReference>
<dbReference type="SUPFAM" id="SSF55120">
    <property type="entry name" value="Pseudouridine synthase"/>
    <property type="match status" value="1"/>
</dbReference>
<accession>B9KKX4</accession>
<reference key="1">
    <citation type="journal article" date="2009" name="J. Bacteriol.">
        <title>Complete genome sequence of Rhodobacter sphaeroides KD131.</title>
        <authorList>
            <person name="Lim S.-K."/>
            <person name="Kim S.J."/>
            <person name="Cha S.H."/>
            <person name="Oh Y.-K."/>
            <person name="Rhee H.-J."/>
            <person name="Kim M.-S."/>
            <person name="Lee J.K."/>
        </authorList>
    </citation>
    <scope>NUCLEOTIDE SEQUENCE [LARGE SCALE GENOMIC DNA]</scope>
    <source>
        <strain>KD131 / KCTC 12085</strain>
    </source>
</reference>
<name>TRUA_CERSK</name>
<evidence type="ECO:0000255" key="1">
    <source>
        <dbReference type="HAMAP-Rule" id="MF_00171"/>
    </source>
</evidence>
<proteinExistence type="inferred from homology"/>
<organism>
    <name type="scientific">Cereibacter sphaeroides (strain KD131 / KCTC 12085)</name>
    <name type="common">Rhodobacter sphaeroides</name>
    <dbReference type="NCBI Taxonomy" id="557760"/>
    <lineage>
        <taxon>Bacteria</taxon>
        <taxon>Pseudomonadati</taxon>
        <taxon>Pseudomonadota</taxon>
        <taxon>Alphaproteobacteria</taxon>
        <taxon>Rhodobacterales</taxon>
        <taxon>Paracoccaceae</taxon>
        <taxon>Cereibacter</taxon>
    </lineage>
</organism>
<protein>
    <recommendedName>
        <fullName evidence="1">tRNA pseudouridine synthase A</fullName>
        <ecNumber evidence="1">5.4.99.12</ecNumber>
    </recommendedName>
    <alternativeName>
        <fullName evidence="1">tRNA pseudouridine(38-40) synthase</fullName>
    </alternativeName>
    <alternativeName>
        <fullName evidence="1">tRNA pseudouridylate synthase I</fullName>
    </alternativeName>
    <alternativeName>
        <fullName evidence="1">tRNA-uridine isomerase I</fullName>
    </alternativeName>
</protein>
<comment type="function">
    <text evidence="1">Formation of pseudouridine at positions 38, 39 and 40 in the anticodon stem and loop of transfer RNAs.</text>
</comment>
<comment type="catalytic activity">
    <reaction evidence="1">
        <text>uridine(38/39/40) in tRNA = pseudouridine(38/39/40) in tRNA</text>
        <dbReference type="Rhea" id="RHEA:22376"/>
        <dbReference type="Rhea" id="RHEA-COMP:10085"/>
        <dbReference type="Rhea" id="RHEA-COMP:10087"/>
        <dbReference type="ChEBI" id="CHEBI:65314"/>
        <dbReference type="ChEBI" id="CHEBI:65315"/>
        <dbReference type="EC" id="5.4.99.12"/>
    </reaction>
</comment>
<comment type="subunit">
    <text evidence="1">Homodimer.</text>
</comment>
<comment type="similarity">
    <text evidence="1">Belongs to the tRNA pseudouridine synthase TruA family.</text>
</comment>
<keyword id="KW-0413">Isomerase</keyword>
<keyword id="KW-0819">tRNA processing</keyword>
<sequence length="255" mass="27708">MPRYALRIEYDGGPFAGWQRQAAQASVQGAIETALGRLELGPHTIAAAGRTDTGVHATGQVAHCDLAREWDPFRLAGALNAHLKPLPVAIVAAARVSEEFHARFSAVERRYLFRLLARRAPEVHDRGRVWRVPHPLDAEAMRAGAAHLVGRHDFTTFRAAGCQAASPIKTLDALTLETVEGANGTEYRFHLRARSFLHNQVRSIVGTLERVGAGAWTPDQVREALDARDRAACGPVCPPQGLYLTGVGYPADPFA</sequence>
<feature type="chain" id="PRO_1000123763" description="tRNA pseudouridine synthase A">
    <location>
        <begin position="1"/>
        <end position="255"/>
    </location>
</feature>
<feature type="active site" description="Nucleophile" evidence="1">
    <location>
        <position position="52"/>
    </location>
</feature>
<feature type="binding site" evidence="1">
    <location>
        <position position="111"/>
    </location>
    <ligand>
        <name>substrate</name>
    </ligand>
</feature>
<gene>
    <name evidence="1" type="primary">truA</name>
    <name type="ordered locus">RSKD131_1911</name>
</gene>